<keyword id="KW-0328">Glycosyltransferase</keyword>
<keyword id="KW-0808">Transferase</keyword>
<evidence type="ECO:0000256" key="1">
    <source>
        <dbReference type="SAM" id="MobiDB-lite"/>
    </source>
</evidence>
<evidence type="ECO:0000269" key="2">
    <source>
    </source>
</evidence>
<evidence type="ECO:0000269" key="3">
    <source>
    </source>
</evidence>
<evidence type="ECO:0000269" key="4">
    <source>
    </source>
</evidence>
<evidence type="ECO:0000269" key="5">
    <source>
    </source>
</evidence>
<evidence type="ECO:0000303" key="6">
    <source>
    </source>
</evidence>
<evidence type="ECO:0000305" key="7"/>
<dbReference type="EC" id="2.4.1.-" evidence="5"/>
<dbReference type="EMBL" id="AB686272">
    <property type="protein sequence ID" value="BAM71031.1"/>
    <property type="molecule type" value="mRNA"/>
</dbReference>
<dbReference type="GO" id="GO:0016757">
    <property type="term" value="F:glycosyltransferase activity"/>
    <property type="evidence" value="ECO:0007669"/>
    <property type="project" value="UniProtKB-KW"/>
</dbReference>
<dbReference type="Gene3D" id="3.90.550.20">
    <property type="match status" value="1"/>
</dbReference>
<dbReference type="InterPro" id="IPR008441">
    <property type="entry name" value="AfumC-like_glycosyl_Trfase"/>
</dbReference>
<dbReference type="InterPro" id="IPR029044">
    <property type="entry name" value="Nucleotide-diphossugar_trans"/>
</dbReference>
<dbReference type="Pfam" id="PF05704">
    <property type="entry name" value="Caps_synth"/>
    <property type="match status" value="1"/>
</dbReference>
<dbReference type="SUPFAM" id="SSF53448">
    <property type="entry name" value="Nucleotide-diphospho-sugar transferases"/>
    <property type="match status" value="1"/>
</dbReference>
<gene>
    <name evidence="6" type="primary">PaGT</name>
    <name evidence="6" type="synonym">orf6</name>
</gene>
<reference key="1">
    <citation type="journal article" date="2012" name="PLoS ONE">
        <title>Molecular breeding of a fungus producing a precursor diterpene suitable for semi-synthesis by dissection of the biosynthetic machinery.</title>
        <authorList>
            <person name="Noike M."/>
            <person name="Ono Y."/>
            <person name="Araki Y."/>
            <person name="Tanio R."/>
            <person name="Higuchi Y."/>
            <person name="Nitta H."/>
            <person name="Hamano Y."/>
            <person name="Toyomasu T."/>
            <person name="Sassa T."/>
            <person name="Kato N."/>
            <person name="Dairi T."/>
        </authorList>
    </citation>
    <scope>NUCLEOTIDE SEQUENCE [MRNA]</scope>
    <scope>FUNCTION</scope>
    <scope>CATALYTIC ACTIVITY</scope>
    <scope>PATHWAY</scope>
</reference>
<reference key="2">
    <citation type="journal article" date="2007" name="Proc. Natl. Acad. Sci. U.S.A.">
        <title>Fusicoccins are biosynthesized by an unusual chimera diterpene synthase in fungi.</title>
        <authorList>
            <person name="Toyomasu T."/>
            <person name="Tsukahara M."/>
            <person name="Kaneko A."/>
            <person name="Niida R."/>
            <person name="Mitsuhashi W."/>
            <person name="Dairi T."/>
            <person name="Kato N."/>
            <person name="Sassa T."/>
        </authorList>
    </citation>
    <scope>FUNCTION</scope>
</reference>
<reference key="3">
    <citation type="journal article" date="2011" name="J. Am. Chem. Soc.">
        <title>Dioxygenases, key enzymes to determine the aglycon structures of fusicoccin and brassicicene, diterpene compounds produced by fungi.</title>
        <authorList>
            <person name="Ono Y."/>
            <person name="Minami A."/>
            <person name="Noike M."/>
            <person name="Higuchi Y."/>
            <person name="Toyomasu T."/>
            <person name="Sassa T."/>
            <person name="Kato N."/>
            <person name="Dairi T."/>
        </authorList>
    </citation>
    <scope>FUNCTION</scope>
</reference>
<reference key="4">
    <citation type="journal article" date="2012" name="ChemBioChem">
        <title>An enzyme catalyzing O-prenylation of the glucose moiety of fusicoccin A, a diterpene glucoside produced by the fungus Phomopsis amygdali.</title>
        <authorList>
            <person name="Noike M."/>
            <person name="Liu C."/>
            <person name="Ono Y."/>
            <person name="Hamano Y."/>
            <person name="Toyomasu T."/>
            <person name="Sassa T."/>
            <person name="Kato N."/>
            <person name="Dairi T."/>
        </authorList>
    </citation>
    <scope>FUNCTION</scope>
</reference>
<protein>
    <recommendedName>
        <fullName evidence="6">O-glycosyltransferase PaGT</fullName>
        <ecNumber evidence="5">2.4.1.-</ecNumber>
    </recommendedName>
    <alternativeName>
        <fullName evidence="6">Fusicoccin A biosynthetic gene clusters protein 6</fullName>
    </alternativeName>
</protein>
<comment type="function">
    <text evidence="2 3 4 5">O-glycosyltransferase; part of the 2 gene clusters that mediate the biosynthesis of fusicoccins, diterpene glucosides that display phytohormone-like activity and function as potent activators of plasma membrane H(+)-ATPases in plants by modifying 14-3-3 proteins and cause the plant disease constriction canker (PubMed:22870285). The first step in the pathway is performed by the fusicoccadiene synthase PaFS that possesses both prenyl transferase and terpene cyclase activity, converting isopentenyl diphosphate and dimethylallyl diphosphate into geranylgeranyl diphosphate (GGDP) and successively converting GGDP into fusicocca-2,10(14)-diene, a precursor for fusicoccin H (PubMed:17360612). The second step is the oxidation at the C-8 position by the cytochrome P450 monooxygenase PaP450-2 to yield fusicocca-2,10(14)-diene-8-beta-ol (PubMed:22870285). The cytochrome P450 monooxygenase PaP450-1 then catalyzes the hydroxylation at the C-16 position to produce fusicocca-2,10(14)-diene-8-beta,16-diol (PubMed:22870285). The dioxygenase fc-dox then catalyzes the 16-oxydation of fusicocca-2,10(14)-diene-8-beta,16-diol to yield an aldehyde (8-beta-hydroxyfusicocca-1,10(14)-dien-16-al) (PubMed:21299202, PubMed:22870285). The short-chain dehydrogenase/reductase fc-sdr catalyzes the reduction of the aldehyde to yield fusicocca-1,10(14)-diene-8-beta,16-diol (PubMed:21299202, PubMed:22870285). The next step is the hydroxylation at C-9 performed by the cytochrome P450 monooxygenase PaP450-3 that leads to fusicoccin H aglycon which is glycosylated to fusicoccin H by the O-glycosyltransferase PaGT (PubMed:22870285). Hydroxylation at C-12 by the cytochrome P450 monooxygenase PaP450-4 leads then to the production of fusicoccin Q and is followed by methylation by the O-methyltransferase PaMT to yield fusicoccin P (PubMed:22870285). Fusicoccin P is further converted to fusicoccin J via prenylation by the O-glucose prenyltransferase PaPT (PubMed:22287087). Cytochrome P450 monooxygenase PaP450-5 then performs hydroxylation at C-19 to yield dideacetyl-fusicoccin A which is acetylated to 3'-O-deacetyl-fusicoccin A by the O-acetyltransferase PaAT-2 (PubMed:22870285). Finally, a another acetylation by the O-acetyltransferase PaAT-1 yields fusicoccin A (PubMed:22870285).</text>
</comment>
<comment type="biophysicochemical properties">
    <kinetics>
        <KM evidence="5">44 uM for dideacetyl-fusicoccin A</KM>
        <KM evidence="5">520 uM for UDP-glucose</KM>
    </kinetics>
    <phDependence>
        <text evidence="5">Optimum pH is 5.5.</text>
    </phDependence>
    <temperatureDependence>
        <text evidence="5">Optimum temperature is 35 degrees Celsius.</text>
    </temperatureDependence>
</comment>
<comment type="pathway">
    <text evidence="5">Mycotoxin biosynthesis.</text>
</comment>
<comment type="similarity">
    <text evidence="7">Belongs to the afumC glycosyltransferase family.</text>
</comment>
<feature type="chain" id="PRO_0000445465" description="O-glycosyltransferase PaGT">
    <location>
        <begin position="1"/>
        <end position="406"/>
    </location>
</feature>
<feature type="region of interest" description="Disordered" evidence="1">
    <location>
        <begin position="1"/>
        <end position="26"/>
    </location>
</feature>
<accession>L0MZK0</accession>
<sequence>MSPPSQIKPPQGTTPVPPSELDPRSDEEIVRSISAHVKPTDSEKNMWAYWHSGWENMPPWTKRNVVHWARMLGTEWTVRVLDGIPGSANYYERFVPPHLLPSAMRERRMSGPYVATHSADFVRLPLLFLYGGCWLDVGAILVRSIQDVWDVLADPKQSYEFAAFTYMMRPGEASIINTWMMGRKNMELLRRWHDTFLHLWGDKSSCDGLHKHPLLSHLRPLSSLTHGLITDENNEPVAKTDKIIDYGAQVYCLDRLRDLVDTNDGWNGRQCIEEKTFLLAALDEMWYYQPKTDYLGSRQFELLTTRYDAPEPQRGDAEEFVNDMLANTMLMKFCHGLKDAMVSSLADIWDDPKHDGTDCAPGTFAEYLRWGTLHLRQTRTLEPVKLTAPAGKLHHVAMFEPFPSTN</sequence>
<name>FC6_PHOAM</name>
<proteinExistence type="evidence at protein level"/>
<organism>
    <name type="scientific">Phomopsis amygdali</name>
    <name type="common">Fusicoccum amygdali</name>
    <dbReference type="NCBI Taxonomy" id="1214568"/>
    <lineage>
        <taxon>Eukaryota</taxon>
        <taxon>Fungi</taxon>
        <taxon>Dikarya</taxon>
        <taxon>Ascomycota</taxon>
        <taxon>Pezizomycotina</taxon>
        <taxon>Sordariomycetes</taxon>
        <taxon>Sordariomycetidae</taxon>
        <taxon>Diaporthales</taxon>
        <taxon>Diaporthaceae</taxon>
        <taxon>Diaporthe</taxon>
    </lineage>
</organism>